<comment type="function">
    <text>Alpha toxins bind voltage-independently at site-3 of sodium channels (Nav) and inhibit the inactivation of the activated channels, thereby blocking neuronal transmission. This toxin is highly toxic to insects and mice, and inhibits the binding of alpha-toxin to cockroach neuronal membranes.</text>
</comment>
<comment type="subcellular location">
    <subcellularLocation>
        <location>Secreted</location>
    </subcellularLocation>
</comment>
<comment type="tissue specificity">
    <text>Expressed by the venom gland.</text>
</comment>
<comment type="domain">
    <text evidence="3">Has the structural arrangement of an alpha-helix connected to antiparallel beta-sheets by disulfide bonds (CS-alpha/beta).</text>
</comment>
<comment type="toxic dose">
    <text evidence="2">LD(50) is 34.3 nmol/kg to cockroaches (Blattella germanica).</text>
</comment>
<comment type="similarity">
    <text evidence="3">Belongs to the long (4 C-C) scorpion toxin superfamily. Sodium channel inhibitor family. Alpha subfamily.</text>
</comment>
<sequence>VRDGYIAQPENCVYHCIPDCDTLCKDNGGTGGHCGFKLGHGIACWCNALPDNVGIIVDGVKCHK</sequence>
<organism>
    <name type="scientific">Leiurus hebraeus</name>
    <name type="common">Hebrew deathstalker scorpion</name>
    <name type="synonym">Leiurus quinquestriatus hebraeus</name>
    <dbReference type="NCBI Taxonomy" id="2899558"/>
    <lineage>
        <taxon>Eukaryota</taxon>
        <taxon>Metazoa</taxon>
        <taxon>Ecdysozoa</taxon>
        <taxon>Arthropoda</taxon>
        <taxon>Chelicerata</taxon>
        <taxon>Arachnida</taxon>
        <taxon>Scorpiones</taxon>
        <taxon>Buthida</taxon>
        <taxon>Buthoidea</taxon>
        <taxon>Buthidae</taxon>
        <taxon>Leiurus</taxon>
    </lineage>
</organism>
<evidence type="ECO:0000255" key="1">
    <source>
        <dbReference type="PROSITE-ProRule" id="PRU01210"/>
    </source>
</evidence>
<evidence type="ECO:0000269" key="2">
    <source>
    </source>
</evidence>
<evidence type="ECO:0000305" key="3"/>
<feature type="chain" id="PRO_0000066786" description="Alpha-like toxin Lqh6">
    <location>
        <begin position="1"/>
        <end position="64"/>
    </location>
</feature>
<feature type="domain" description="LCN-type CS-alpha/beta" evidence="1">
    <location>
        <begin position="2"/>
        <end position="63"/>
    </location>
</feature>
<feature type="modified residue" description="Lysine amide" evidence="2">
    <location>
        <position position="64"/>
    </location>
</feature>
<feature type="disulfide bond" evidence="1">
    <location>
        <begin position="12"/>
        <end position="62"/>
    </location>
</feature>
<feature type="disulfide bond" evidence="1">
    <location>
        <begin position="16"/>
        <end position="34"/>
    </location>
</feature>
<feature type="disulfide bond" evidence="1">
    <location>
        <begin position="20"/>
        <end position="44"/>
    </location>
</feature>
<feature type="disulfide bond" evidence="1">
    <location>
        <begin position="24"/>
        <end position="46"/>
    </location>
</feature>
<name>SCL6_LEIHE</name>
<keyword id="KW-0027">Amidation</keyword>
<keyword id="KW-0903">Direct protein sequencing</keyword>
<keyword id="KW-1015">Disulfide bond</keyword>
<keyword id="KW-0872">Ion channel impairing toxin</keyword>
<keyword id="KW-0528">Neurotoxin</keyword>
<keyword id="KW-0964">Secreted</keyword>
<keyword id="KW-0800">Toxin</keyword>
<keyword id="KW-0738">Voltage-gated sodium channel impairing toxin</keyword>
<protein>
    <recommendedName>
        <fullName>Alpha-like toxin Lqh6</fullName>
    </recommendedName>
    <alternativeName>
        <fullName>Lqh VI</fullName>
        <shortName>LqhVI</shortName>
    </alternativeName>
</protein>
<accession>P59356</accession>
<reference key="1">
    <citation type="journal article" date="2002" name="Eur. J. Biochem.">
        <title>Characterization of scorpion alpha-like toxin group using two new toxins from the scorpion Leiurus quinquestriatus hebraeus.</title>
        <authorList>
            <person name="Hamon A."/>
            <person name="Gilles N."/>
            <person name="Sautiere P."/>
            <person name="Martinage A."/>
            <person name="Kopeyan C."/>
            <person name="Ulens C."/>
            <person name="Tytgat J."/>
            <person name="Lancelin J.-M."/>
            <person name="Gordon D."/>
        </authorList>
    </citation>
    <scope>PROTEIN SEQUENCE</scope>
    <scope>PHARMACOLOGICAL CHARACTERIZATION</scope>
    <scope>AMIDATION AT LYS-64</scope>
    <scope>TOXIC DOSE</scope>
    <source>
        <tissue>Venom</tissue>
    </source>
</reference>
<dbReference type="SMR" id="P59356"/>
<dbReference type="GO" id="GO:0005576">
    <property type="term" value="C:extracellular region"/>
    <property type="evidence" value="ECO:0007669"/>
    <property type="project" value="UniProtKB-SubCell"/>
</dbReference>
<dbReference type="GO" id="GO:0019871">
    <property type="term" value="F:sodium channel inhibitor activity"/>
    <property type="evidence" value="ECO:0007669"/>
    <property type="project" value="InterPro"/>
</dbReference>
<dbReference type="GO" id="GO:0090729">
    <property type="term" value="F:toxin activity"/>
    <property type="evidence" value="ECO:0007669"/>
    <property type="project" value="UniProtKB-KW"/>
</dbReference>
<dbReference type="GO" id="GO:0006952">
    <property type="term" value="P:defense response"/>
    <property type="evidence" value="ECO:0007669"/>
    <property type="project" value="InterPro"/>
</dbReference>
<dbReference type="CDD" id="cd23106">
    <property type="entry name" value="neurotoxins_LC_scorpion"/>
    <property type="match status" value="1"/>
</dbReference>
<dbReference type="Gene3D" id="3.30.30.10">
    <property type="entry name" value="Knottin, scorpion toxin-like"/>
    <property type="match status" value="1"/>
</dbReference>
<dbReference type="InterPro" id="IPR044062">
    <property type="entry name" value="LCN-type_CS_alpha_beta_dom"/>
</dbReference>
<dbReference type="InterPro" id="IPR003614">
    <property type="entry name" value="Scorpion_toxin-like"/>
</dbReference>
<dbReference type="InterPro" id="IPR036574">
    <property type="entry name" value="Scorpion_toxin-like_sf"/>
</dbReference>
<dbReference type="InterPro" id="IPR002061">
    <property type="entry name" value="Scorpion_toxinL/defensin"/>
</dbReference>
<dbReference type="Pfam" id="PF00537">
    <property type="entry name" value="Toxin_3"/>
    <property type="match status" value="1"/>
</dbReference>
<dbReference type="SMART" id="SM00505">
    <property type="entry name" value="Knot1"/>
    <property type="match status" value="1"/>
</dbReference>
<dbReference type="SUPFAM" id="SSF57095">
    <property type="entry name" value="Scorpion toxin-like"/>
    <property type="match status" value="1"/>
</dbReference>
<dbReference type="PROSITE" id="PS51863">
    <property type="entry name" value="LCN_CSAB"/>
    <property type="match status" value="1"/>
</dbReference>
<proteinExistence type="evidence at protein level"/>